<sequence length="126" mass="15019">MSNIISKEQDEAIKYFRNKLNLSDKDLYIPLINFELLRDKNEQYANILYELYKNDPYLFIRALKEGYVVNQPIAFDEAIVRFFNGEELAIVHKTTGRRYNVNVKMKQLPDGFSLQTMDMWLWSELV</sequence>
<name>YORC_BACSU</name>
<accession>O31910</accession>
<dbReference type="EMBL" id="AL009126">
    <property type="protein sequence ID" value="CAB13935.1"/>
    <property type="molecule type" value="Genomic_DNA"/>
</dbReference>
<dbReference type="RefSeq" id="NP_389925.1">
    <property type="nucleotide sequence ID" value="NC_000964.3"/>
</dbReference>
<dbReference type="RefSeq" id="WP_004399313.1">
    <property type="nucleotide sequence ID" value="NZ_OZ025638.1"/>
</dbReference>
<dbReference type="FunCoup" id="O31910">
    <property type="interactions" value="23"/>
</dbReference>
<dbReference type="STRING" id="224308.BSU20430"/>
<dbReference type="PaxDb" id="224308-BSU20430"/>
<dbReference type="EnsemblBacteria" id="CAB13935">
    <property type="protein sequence ID" value="CAB13935"/>
    <property type="gene ID" value="BSU_20430"/>
</dbReference>
<dbReference type="GeneID" id="936462"/>
<dbReference type="KEGG" id="bsu:BSU20430"/>
<dbReference type="PATRIC" id="fig|224308.179.peg.2233"/>
<dbReference type="InParanoid" id="O31910"/>
<dbReference type="OrthoDB" id="2896750at2"/>
<dbReference type="BioCyc" id="BSUB:BSU20430-MONOMER"/>
<dbReference type="Proteomes" id="UP000001570">
    <property type="component" value="Chromosome"/>
</dbReference>
<proteinExistence type="predicted"/>
<gene>
    <name type="primary">yorC</name>
    <name type="ordered locus">BSU20430</name>
</gene>
<feature type="chain" id="PRO_0000360198" description="SPbeta prophage-derived uncharacterized protein YorC">
    <location>
        <begin position="1"/>
        <end position="126"/>
    </location>
</feature>
<organism>
    <name type="scientific">Bacillus subtilis (strain 168)</name>
    <dbReference type="NCBI Taxonomy" id="224308"/>
    <lineage>
        <taxon>Bacteria</taxon>
        <taxon>Bacillati</taxon>
        <taxon>Bacillota</taxon>
        <taxon>Bacilli</taxon>
        <taxon>Bacillales</taxon>
        <taxon>Bacillaceae</taxon>
        <taxon>Bacillus</taxon>
    </lineage>
</organism>
<keyword id="KW-1185">Reference proteome</keyword>
<reference key="1">
    <citation type="journal article" date="1997" name="Nature">
        <title>The complete genome sequence of the Gram-positive bacterium Bacillus subtilis.</title>
        <authorList>
            <person name="Kunst F."/>
            <person name="Ogasawara N."/>
            <person name="Moszer I."/>
            <person name="Albertini A.M."/>
            <person name="Alloni G."/>
            <person name="Azevedo V."/>
            <person name="Bertero M.G."/>
            <person name="Bessieres P."/>
            <person name="Bolotin A."/>
            <person name="Borchert S."/>
            <person name="Borriss R."/>
            <person name="Boursier L."/>
            <person name="Brans A."/>
            <person name="Braun M."/>
            <person name="Brignell S.C."/>
            <person name="Bron S."/>
            <person name="Brouillet S."/>
            <person name="Bruschi C.V."/>
            <person name="Caldwell B."/>
            <person name="Capuano V."/>
            <person name="Carter N.M."/>
            <person name="Choi S.-K."/>
            <person name="Codani J.-J."/>
            <person name="Connerton I.F."/>
            <person name="Cummings N.J."/>
            <person name="Daniel R.A."/>
            <person name="Denizot F."/>
            <person name="Devine K.M."/>
            <person name="Duesterhoeft A."/>
            <person name="Ehrlich S.D."/>
            <person name="Emmerson P.T."/>
            <person name="Entian K.-D."/>
            <person name="Errington J."/>
            <person name="Fabret C."/>
            <person name="Ferrari E."/>
            <person name="Foulger D."/>
            <person name="Fritz C."/>
            <person name="Fujita M."/>
            <person name="Fujita Y."/>
            <person name="Fuma S."/>
            <person name="Galizzi A."/>
            <person name="Galleron N."/>
            <person name="Ghim S.-Y."/>
            <person name="Glaser P."/>
            <person name="Goffeau A."/>
            <person name="Golightly E.J."/>
            <person name="Grandi G."/>
            <person name="Guiseppi G."/>
            <person name="Guy B.J."/>
            <person name="Haga K."/>
            <person name="Haiech J."/>
            <person name="Harwood C.R."/>
            <person name="Henaut A."/>
            <person name="Hilbert H."/>
            <person name="Holsappel S."/>
            <person name="Hosono S."/>
            <person name="Hullo M.-F."/>
            <person name="Itaya M."/>
            <person name="Jones L.-M."/>
            <person name="Joris B."/>
            <person name="Karamata D."/>
            <person name="Kasahara Y."/>
            <person name="Klaerr-Blanchard M."/>
            <person name="Klein C."/>
            <person name="Kobayashi Y."/>
            <person name="Koetter P."/>
            <person name="Koningstein G."/>
            <person name="Krogh S."/>
            <person name="Kumano M."/>
            <person name="Kurita K."/>
            <person name="Lapidus A."/>
            <person name="Lardinois S."/>
            <person name="Lauber J."/>
            <person name="Lazarevic V."/>
            <person name="Lee S.-M."/>
            <person name="Levine A."/>
            <person name="Liu H."/>
            <person name="Masuda S."/>
            <person name="Mauel C."/>
            <person name="Medigue C."/>
            <person name="Medina N."/>
            <person name="Mellado R.P."/>
            <person name="Mizuno M."/>
            <person name="Moestl D."/>
            <person name="Nakai S."/>
            <person name="Noback M."/>
            <person name="Noone D."/>
            <person name="O'Reilly M."/>
            <person name="Ogawa K."/>
            <person name="Ogiwara A."/>
            <person name="Oudega B."/>
            <person name="Park S.-H."/>
            <person name="Parro V."/>
            <person name="Pohl T.M."/>
            <person name="Portetelle D."/>
            <person name="Porwollik S."/>
            <person name="Prescott A.M."/>
            <person name="Presecan E."/>
            <person name="Pujic P."/>
            <person name="Purnelle B."/>
            <person name="Rapoport G."/>
            <person name="Rey M."/>
            <person name="Reynolds S."/>
            <person name="Rieger M."/>
            <person name="Rivolta C."/>
            <person name="Rocha E."/>
            <person name="Roche B."/>
            <person name="Rose M."/>
            <person name="Sadaie Y."/>
            <person name="Sato T."/>
            <person name="Scanlan E."/>
            <person name="Schleich S."/>
            <person name="Schroeter R."/>
            <person name="Scoffone F."/>
            <person name="Sekiguchi J."/>
            <person name="Sekowska A."/>
            <person name="Seror S.J."/>
            <person name="Serror P."/>
            <person name="Shin B.-S."/>
            <person name="Soldo B."/>
            <person name="Sorokin A."/>
            <person name="Tacconi E."/>
            <person name="Takagi T."/>
            <person name="Takahashi H."/>
            <person name="Takemaru K."/>
            <person name="Takeuchi M."/>
            <person name="Tamakoshi A."/>
            <person name="Tanaka T."/>
            <person name="Terpstra P."/>
            <person name="Tognoni A."/>
            <person name="Tosato V."/>
            <person name="Uchiyama S."/>
            <person name="Vandenbol M."/>
            <person name="Vannier F."/>
            <person name="Vassarotti A."/>
            <person name="Viari A."/>
            <person name="Wambutt R."/>
            <person name="Wedler E."/>
            <person name="Wedler H."/>
            <person name="Weitzenegger T."/>
            <person name="Winters P."/>
            <person name="Wipat A."/>
            <person name="Yamamoto H."/>
            <person name="Yamane K."/>
            <person name="Yasumoto K."/>
            <person name="Yata K."/>
            <person name="Yoshida K."/>
            <person name="Yoshikawa H.-F."/>
            <person name="Zumstein E."/>
            <person name="Yoshikawa H."/>
            <person name="Danchin A."/>
        </authorList>
    </citation>
    <scope>NUCLEOTIDE SEQUENCE [LARGE SCALE GENOMIC DNA]</scope>
    <source>
        <strain>168</strain>
    </source>
</reference>
<protein>
    <recommendedName>
        <fullName>SPbeta prophage-derived uncharacterized protein YorC</fullName>
    </recommendedName>
</protein>